<name>URK_CHLSY</name>
<proteinExistence type="inferred from homology"/>
<evidence type="ECO:0000255" key="1">
    <source>
        <dbReference type="HAMAP-Rule" id="MF_00551"/>
    </source>
</evidence>
<dbReference type="EC" id="2.7.1.48" evidence="1"/>
<dbReference type="EMBL" id="CP001364">
    <property type="protein sequence ID" value="ACM53251.1"/>
    <property type="molecule type" value="Genomic_DNA"/>
</dbReference>
<dbReference type="SMR" id="B9LED5"/>
<dbReference type="KEGG" id="chl:Chy400_1844"/>
<dbReference type="HOGENOM" id="CLU_021278_1_2_0"/>
<dbReference type="OrthoDB" id="9777642at2"/>
<dbReference type="UniPathway" id="UPA00574">
    <property type="reaction ID" value="UER00637"/>
</dbReference>
<dbReference type="UniPathway" id="UPA00579">
    <property type="reaction ID" value="UER00640"/>
</dbReference>
<dbReference type="GO" id="GO:0005737">
    <property type="term" value="C:cytoplasm"/>
    <property type="evidence" value="ECO:0007669"/>
    <property type="project" value="UniProtKB-SubCell"/>
</dbReference>
<dbReference type="GO" id="GO:0005524">
    <property type="term" value="F:ATP binding"/>
    <property type="evidence" value="ECO:0007669"/>
    <property type="project" value="UniProtKB-UniRule"/>
</dbReference>
<dbReference type="GO" id="GO:0043771">
    <property type="term" value="F:cytidine kinase activity"/>
    <property type="evidence" value="ECO:0007669"/>
    <property type="project" value="RHEA"/>
</dbReference>
<dbReference type="GO" id="GO:0004849">
    <property type="term" value="F:uridine kinase activity"/>
    <property type="evidence" value="ECO:0007669"/>
    <property type="project" value="UniProtKB-UniRule"/>
</dbReference>
<dbReference type="GO" id="GO:0044211">
    <property type="term" value="P:CTP salvage"/>
    <property type="evidence" value="ECO:0007669"/>
    <property type="project" value="UniProtKB-UniRule"/>
</dbReference>
<dbReference type="GO" id="GO:0044206">
    <property type="term" value="P:UMP salvage"/>
    <property type="evidence" value="ECO:0007669"/>
    <property type="project" value="UniProtKB-UniRule"/>
</dbReference>
<dbReference type="CDD" id="cd02023">
    <property type="entry name" value="UMPK"/>
    <property type="match status" value="1"/>
</dbReference>
<dbReference type="Gene3D" id="3.40.50.300">
    <property type="entry name" value="P-loop containing nucleotide triphosphate hydrolases"/>
    <property type="match status" value="1"/>
</dbReference>
<dbReference type="HAMAP" id="MF_00551">
    <property type="entry name" value="Uridine_kinase"/>
    <property type="match status" value="1"/>
</dbReference>
<dbReference type="InterPro" id="IPR027417">
    <property type="entry name" value="P-loop_NTPase"/>
</dbReference>
<dbReference type="InterPro" id="IPR006083">
    <property type="entry name" value="PRK/URK"/>
</dbReference>
<dbReference type="InterPro" id="IPR026008">
    <property type="entry name" value="Uridine_kinase"/>
</dbReference>
<dbReference type="InterPro" id="IPR000764">
    <property type="entry name" value="Uridine_kinase-like"/>
</dbReference>
<dbReference type="NCBIfam" id="NF004018">
    <property type="entry name" value="PRK05480.1"/>
    <property type="match status" value="1"/>
</dbReference>
<dbReference type="NCBIfam" id="TIGR00235">
    <property type="entry name" value="udk"/>
    <property type="match status" value="1"/>
</dbReference>
<dbReference type="PANTHER" id="PTHR10285">
    <property type="entry name" value="URIDINE KINASE"/>
    <property type="match status" value="1"/>
</dbReference>
<dbReference type="Pfam" id="PF00485">
    <property type="entry name" value="PRK"/>
    <property type="match status" value="1"/>
</dbReference>
<dbReference type="PRINTS" id="PR00988">
    <property type="entry name" value="URIDINKINASE"/>
</dbReference>
<dbReference type="SUPFAM" id="SSF52540">
    <property type="entry name" value="P-loop containing nucleoside triphosphate hydrolases"/>
    <property type="match status" value="1"/>
</dbReference>
<keyword id="KW-0067">ATP-binding</keyword>
<keyword id="KW-0963">Cytoplasm</keyword>
<keyword id="KW-0418">Kinase</keyword>
<keyword id="KW-0547">Nucleotide-binding</keyword>
<keyword id="KW-0808">Transferase</keyword>
<comment type="catalytic activity">
    <reaction evidence="1">
        <text>uridine + ATP = UMP + ADP + H(+)</text>
        <dbReference type="Rhea" id="RHEA:16825"/>
        <dbReference type="ChEBI" id="CHEBI:15378"/>
        <dbReference type="ChEBI" id="CHEBI:16704"/>
        <dbReference type="ChEBI" id="CHEBI:30616"/>
        <dbReference type="ChEBI" id="CHEBI:57865"/>
        <dbReference type="ChEBI" id="CHEBI:456216"/>
        <dbReference type="EC" id="2.7.1.48"/>
    </reaction>
</comment>
<comment type="catalytic activity">
    <reaction evidence="1">
        <text>cytidine + ATP = CMP + ADP + H(+)</text>
        <dbReference type="Rhea" id="RHEA:24674"/>
        <dbReference type="ChEBI" id="CHEBI:15378"/>
        <dbReference type="ChEBI" id="CHEBI:17562"/>
        <dbReference type="ChEBI" id="CHEBI:30616"/>
        <dbReference type="ChEBI" id="CHEBI:60377"/>
        <dbReference type="ChEBI" id="CHEBI:456216"/>
        <dbReference type="EC" id="2.7.1.48"/>
    </reaction>
</comment>
<comment type="pathway">
    <text evidence="1">Pyrimidine metabolism; CTP biosynthesis via salvage pathway; CTP from cytidine: step 1/3.</text>
</comment>
<comment type="pathway">
    <text evidence="1">Pyrimidine metabolism; UMP biosynthesis via salvage pathway; UMP from uridine: step 1/1.</text>
</comment>
<comment type="subcellular location">
    <subcellularLocation>
        <location evidence="1">Cytoplasm</location>
    </subcellularLocation>
</comment>
<comment type="similarity">
    <text evidence="1">Belongs to the uridine kinase family.</text>
</comment>
<gene>
    <name evidence="1" type="primary">udk</name>
    <name type="ordered locus">Chy400_1844</name>
</gene>
<reference key="1">
    <citation type="submission" date="2009-01" db="EMBL/GenBank/DDBJ databases">
        <title>Complete sequence of Chloroflexus sp. Y-400-fl.</title>
        <authorList>
            <consortium name="US DOE Joint Genome Institute"/>
            <person name="Lucas S."/>
            <person name="Copeland A."/>
            <person name="Lapidus A."/>
            <person name="Glavina del Rio T."/>
            <person name="Dalin E."/>
            <person name="Tice H."/>
            <person name="Bruce D."/>
            <person name="Goodwin L."/>
            <person name="Pitluck S."/>
            <person name="Sims D."/>
            <person name="Kiss H."/>
            <person name="Brettin T."/>
            <person name="Detter J.C."/>
            <person name="Han C."/>
            <person name="Larimer F."/>
            <person name="Land M."/>
            <person name="Hauser L."/>
            <person name="Kyrpides N."/>
            <person name="Ovchinnikova G."/>
            <person name="Bryant D.A."/>
            <person name="Richardson P."/>
        </authorList>
    </citation>
    <scope>NUCLEOTIDE SEQUENCE [LARGE SCALE GENOMIC DNA]</scope>
    <source>
        <strain>ATCC 29364 / DSM 637 / Y-400-fl</strain>
    </source>
</reference>
<protein>
    <recommendedName>
        <fullName evidence="1">Uridine kinase</fullName>
        <ecNumber evidence="1">2.7.1.48</ecNumber>
    </recommendedName>
    <alternativeName>
        <fullName evidence="1">Cytidine monophosphokinase</fullName>
    </alternativeName>
    <alternativeName>
        <fullName evidence="1">Uridine monophosphokinase</fullName>
    </alternativeName>
</protein>
<accession>B9LED5</accession>
<feature type="chain" id="PRO_1000200510" description="Uridine kinase">
    <location>
        <begin position="1"/>
        <end position="209"/>
    </location>
</feature>
<feature type="binding site" evidence="1">
    <location>
        <begin position="12"/>
        <end position="19"/>
    </location>
    <ligand>
        <name>ATP</name>
        <dbReference type="ChEBI" id="CHEBI:30616"/>
    </ligand>
</feature>
<sequence length="209" mass="23636">MSTYPIIIGVAGGSASGKTSVAQAILQRVGADRIAHIDHDRYYKDLSHLPLEERAKFNFDHPDALDNDLLVAHLDALCAGQSVDLPTYDYATYVRLPQTERIEPRPVILVEGILIFYEPVLRRRMQIKLFVDTDADLRFIRRLRRDIVERGRSVESVIEQYLATVRPMHLEFVEPTKRYADVIFPGGGRNPIAIDMVVARIEAALQATP</sequence>
<organism>
    <name type="scientific">Chloroflexus aurantiacus (strain ATCC 29364 / DSM 637 / Y-400-fl)</name>
    <dbReference type="NCBI Taxonomy" id="480224"/>
    <lineage>
        <taxon>Bacteria</taxon>
        <taxon>Bacillati</taxon>
        <taxon>Chloroflexota</taxon>
        <taxon>Chloroflexia</taxon>
        <taxon>Chloroflexales</taxon>
        <taxon>Chloroflexineae</taxon>
        <taxon>Chloroflexaceae</taxon>
        <taxon>Chloroflexus</taxon>
    </lineage>
</organism>